<dbReference type="EC" id="1.-.-.-" evidence="10"/>
<dbReference type="EMBL" id="GU574477">
    <property type="protein sequence ID" value="ADI24934.1"/>
    <property type="molecule type" value="Genomic_DNA"/>
</dbReference>
<dbReference type="SMR" id="D7PHZ9"/>
<dbReference type="GlyCosmos" id="D7PHZ9">
    <property type="glycosylation" value="3 sites, No reported glycans"/>
</dbReference>
<dbReference type="BioCyc" id="MetaCyc:MONOMER-19279"/>
<dbReference type="UniPathway" id="UPA00213"/>
<dbReference type="GO" id="GO:0071949">
    <property type="term" value="F:FAD binding"/>
    <property type="evidence" value="ECO:0007669"/>
    <property type="project" value="InterPro"/>
</dbReference>
<dbReference type="GO" id="GO:0004497">
    <property type="term" value="F:monooxygenase activity"/>
    <property type="evidence" value="ECO:0007669"/>
    <property type="project" value="UniProtKB-KW"/>
</dbReference>
<dbReference type="GO" id="GO:0016114">
    <property type="term" value="P:terpenoid biosynthetic process"/>
    <property type="evidence" value="ECO:0007669"/>
    <property type="project" value="UniProtKB-UniPathway"/>
</dbReference>
<dbReference type="GO" id="GO:0140872">
    <property type="term" value="P:viridicatumtoxin biosynthetic process"/>
    <property type="evidence" value="ECO:0000304"/>
    <property type="project" value="GO_Central"/>
</dbReference>
<dbReference type="Gene3D" id="3.50.50.60">
    <property type="entry name" value="FAD/NAD(P)-binding domain"/>
    <property type="match status" value="1"/>
</dbReference>
<dbReference type="InterPro" id="IPR002938">
    <property type="entry name" value="FAD-bd"/>
</dbReference>
<dbReference type="InterPro" id="IPR036188">
    <property type="entry name" value="FAD/NAD-bd_sf"/>
</dbReference>
<dbReference type="PANTHER" id="PTHR47178:SF4">
    <property type="entry name" value="FAD-DEPENDENT MONOOXYGENASE APTC"/>
    <property type="match status" value="1"/>
</dbReference>
<dbReference type="PANTHER" id="PTHR47178">
    <property type="entry name" value="MONOOXYGENASE, FAD-BINDING"/>
    <property type="match status" value="1"/>
</dbReference>
<dbReference type="Pfam" id="PF01494">
    <property type="entry name" value="FAD_binding_3"/>
    <property type="match status" value="1"/>
</dbReference>
<dbReference type="PRINTS" id="PR00420">
    <property type="entry name" value="RNGMNOXGNASE"/>
</dbReference>
<dbReference type="SUPFAM" id="SSF51905">
    <property type="entry name" value="FAD/NAD(P)-binding domain"/>
    <property type="match status" value="1"/>
</dbReference>
<proteinExistence type="evidence at protein level"/>
<evidence type="ECO:0000250" key="1">
    <source>
        <dbReference type="UniProtKB" id="B8M9J8"/>
    </source>
</evidence>
<evidence type="ECO:0000255" key="2"/>
<evidence type="ECO:0000255" key="3">
    <source>
        <dbReference type="PROSITE-ProRule" id="PRU00498"/>
    </source>
</evidence>
<evidence type="ECO:0000269" key="4">
    <source>
    </source>
</evidence>
<evidence type="ECO:0000269" key="5">
    <source>
    </source>
</evidence>
<evidence type="ECO:0000269" key="6">
    <source>
    </source>
</evidence>
<evidence type="ECO:0000269" key="7">
    <source>
    </source>
</evidence>
<evidence type="ECO:0000303" key="8">
    <source>
    </source>
</evidence>
<evidence type="ECO:0000305" key="9"/>
<evidence type="ECO:0000305" key="10">
    <source>
    </source>
</evidence>
<reference key="1">
    <citation type="journal article" date="2010" name="Chem. Biol.">
        <title>Identification of the viridicatumtoxin and griseofulvin gene clusters from Penicillium aethiopicum.</title>
        <authorList>
            <person name="Chooi Y.H."/>
            <person name="Cacho R."/>
            <person name="Tang Y."/>
        </authorList>
    </citation>
    <scope>NUCLEOTIDE SEQUENCE [GENOMIC DNA]</scope>
    <scope>FUNCTION</scope>
    <source>
        <strain>IBT 5753</strain>
    </source>
</reference>
<reference key="2">
    <citation type="journal article" date="2008" name="J. Antibiot.">
        <title>Viridicatumtoxin B, a new anti-MRSA agent from Penicillium sp. FR11.</title>
        <authorList>
            <person name="Zheng C.J."/>
            <person name="Yu H.E."/>
            <person name="Kim E.H."/>
            <person name="Kim W.G."/>
        </authorList>
    </citation>
    <scope>BIOTECHNOLOGY</scope>
</reference>
<reference key="3">
    <citation type="journal article" date="2013" name="J. Am. Chem. Soc.">
        <title>A cytochrome P450 serves as an unexpected terpene cyclase during fungal meroterpenoid biosynthesis.</title>
        <authorList>
            <person name="Chooi Y.H."/>
            <person name="Hong Y.J."/>
            <person name="Cacho R.A."/>
            <person name="Tantillo D.J."/>
            <person name="Tang Y."/>
        </authorList>
    </citation>
    <scope>FUNCTION</scope>
</reference>
<reference key="4">
    <citation type="journal article" date="2016" name="J. Antibiot.">
        <title>Inhibition of bacterial undecaprenyl pyrophosphate synthase by small fungal molecules.</title>
        <authorList>
            <person name="Inokoshi J."/>
            <person name="Nakamura Y."/>
            <person name="Komada S."/>
            <person name="Komatsu K."/>
            <person name="Umeyama H."/>
            <person name="Tomoda H."/>
        </authorList>
    </citation>
    <scope>BIOTECHNOLOGY</scope>
</reference>
<sequence length="413" mass="45397">MQRANHTRPVLIIGAGLSGLAIGRLLTNNGIANIVFEASPPERSQGFAISLHDWGYSLLLEALGGLSLRAMTKAVAPDRFIGGTGWVDLIMRDNTTGKVLVEPDVDARPAVIRANRNSLRAWMADCGDDELDVRYGHRLKSISGSVGNVQAVFENGAEYRGSIVIAADGVHSAVRSQVLPHIVPEVLPVVVYHGEFQVSHDEYDRCVRPVIGTANILAGVGDGFNTPITVCNITKTQVHLDWSYSRPARGENDPLFSTKTPEDQTRDLPQALLEELASRQLAEPWAKYINPETIQQHSVFRWISRCVYMPTADALHAAQAGVVFIGDAWHAMPIFGGEGGNHALVDSVELAAAMVKEANVERAVAVYYEGAARRCQEAVRRSRSRFYVLHRPMAEWRDIAEKRRAKAALEQKH</sequence>
<feature type="signal peptide" evidence="2">
    <location>
        <begin position="1"/>
        <end position="23"/>
    </location>
</feature>
<feature type="chain" id="PRO_0000436822" description="FAD-dependent monooxygenase vrtH">
    <location>
        <begin position="24"/>
        <end position="413"/>
    </location>
</feature>
<feature type="binding site" evidence="1">
    <location>
        <position position="37"/>
    </location>
    <ligand>
        <name>FAD</name>
        <dbReference type="ChEBI" id="CHEBI:57692"/>
    </ligand>
</feature>
<feature type="binding site" evidence="1">
    <location>
        <position position="48"/>
    </location>
    <ligand>
        <name>FAD</name>
        <dbReference type="ChEBI" id="CHEBI:57692"/>
    </ligand>
</feature>
<feature type="binding site" evidence="1">
    <location>
        <position position="120"/>
    </location>
    <ligand>
        <name>FAD</name>
        <dbReference type="ChEBI" id="CHEBI:57692"/>
    </ligand>
</feature>
<feature type="binding site" evidence="1">
    <location>
        <position position="327"/>
    </location>
    <ligand>
        <name>FAD</name>
        <dbReference type="ChEBI" id="CHEBI:57692"/>
    </ligand>
</feature>
<feature type="binding site" evidence="1">
    <location>
        <position position="340"/>
    </location>
    <ligand>
        <name>FAD</name>
        <dbReference type="ChEBI" id="CHEBI:57692"/>
    </ligand>
</feature>
<feature type="glycosylation site" description="N-linked (GlcNAc...) asparagine" evidence="3">
    <location>
        <position position="5"/>
    </location>
</feature>
<feature type="glycosylation site" description="N-linked (GlcNAc...) asparagine" evidence="3">
    <location>
        <position position="94"/>
    </location>
</feature>
<feature type="glycosylation site" description="N-linked (GlcNAc...) asparagine" evidence="3">
    <location>
        <position position="232"/>
    </location>
</feature>
<gene>
    <name evidence="8" type="primary">vrtH</name>
</gene>
<keyword id="KW-0274">FAD</keyword>
<keyword id="KW-0285">Flavoprotein</keyword>
<keyword id="KW-0325">Glycoprotein</keyword>
<keyword id="KW-0503">Monooxygenase</keyword>
<keyword id="KW-0560">Oxidoreductase</keyword>
<keyword id="KW-0732">Signal</keyword>
<accession>D7PHZ9</accession>
<organism>
    <name type="scientific">Penicillium aethiopicum</name>
    <dbReference type="NCBI Taxonomy" id="36650"/>
    <lineage>
        <taxon>Eukaryota</taxon>
        <taxon>Fungi</taxon>
        <taxon>Dikarya</taxon>
        <taxon>Ascomycota</taxon>
        <taxon>Pezizomycotina</taxon>
        <taxon>Eurotiomycetes</taxon>
        <taxon>Eurotiomycetidae</taxon>
        <taxon>Eurotiales</taxon>
        <taxon>Aspergillaceae</taxon>
        <taxon>Penicillium</taxon>
    </lineage>
</organism>
<name>VRTH_PENAE</name>
<protein>
    <recommendedName>
        <fullName evidence="8">FAD-dependent monooxygenase vrtH</fullName>
        <ecNumber evidence="10">1.-.-.-</ecNumber>
    </recommendedName>
    <alternativeName>
        <fullName evidence="8">Viridicatumtoxin synthesis protein H</fullName>
    </alternativeName>
</protein>
<comment type="function">
    <text evidence="5 6">FAD-dependent monooxygenase; part of the gene cluster that mediates the biosynthesis of viridicatumtoxin, a tetracycline-like fungal meroterpenoid with a unique, fused spirobicyclic ring system (PubMed:20534346). The first step of the pathway is the production of the malonamoyl-CoA starter unit for the polyketide synthase vrtA (PubMed:20534346). The aldolase vrtJ may be involved in the synthesis of the malonamate substrate for malonamoyl-CoA synthetase vrtB (PubMed:20534346). The polyketide synthase vrtA then may utilize the malonamoyl-CoA starter unit, followed by sequential condensation of eight malonyl-CoA units to form the polyketide backbone (PubMed:20534346). The cyclization of the last ring could be mediated by the lactamase-like protein vrtG (PubMed:20534346). The proposed post-PKS tailoring steps are a hydroxylation at C5 catalyzed the cytochrome P450 monooxygenase vrtE, a hydroxylation at C12a catalyzed by VrtH and/or VrtI, and an O-methylation by the O-methyltransferase vrtF (PubMed:20534346, PubMed:24161266). VrtC is then proposed to catalyze the transfer of a geranyl group synthesized by vrtD to the aromatic C ring of the tetracyclic polyketide intermediate of viridicatumtoxin to yield previridicatumtoxin (PubMed:20534346). Finally, the cytochrome P450 monooxygenase vrtK catalyzes the spirocyclization of the geranyl moiety of previridicatumtoxin to afford viridicatumtoxin (PubMed:24161266).</text>
</comment>
<comment type="cofactor">
    <cofactor evidence="9">
        <name>FAD</name>
        <dbReference type="ChEBI" id="CHEBI:57692"/>
    </cofactor>
</comment>
<comment type="pathway">
    <text evidence="5">Secondary metabolite biosynthesis; terpenoid biosynthesis.</text>
</comment>
<comment type="biotechnology">
    <text evidence="4 7">Viridicatumtoxin and its derivative, viridicatumtoxin B, exhibit anti-methicillin-resistant Staphylococcus aureus (anti-MRSA) activity (PubMed:19168978). Moreover, viridicatumtoxin and a C2 acetyl analog, spirohexaline, have been demonstrated to inhibit bacterial undecaprenyl diphosphate synthase, a potential new target for antibiotic development (PubMed:27049441).</text>
</comment>
<comment type="similarity">
    <text evidence="9">Belongs to the paxM FAD-dependent monooxygenase family.</text>
</comment>